<reference key="1">
    <citation type="journal article" date="1996" name="Biotechnol. Lett.">
        <title>Cloning of genes encoding heterotetrameric sarcosine oxidase from Arthrobacter sp.</title>
        <authorList>
            <person name="Meskys R."/>
            <person name="Rudomanskis R."/>
            <person name="Leipuviene R."/>
        </authorList>
    </citation>
    <scope>NUCLEOTIDE SEQUENCE [GENOMIC DNA]</scope>
    <scope>FUNCTION</scope>
    <scope>CATALYTIC ACTIVITY</scope>
    <scope>SUBUNIT</scope>
    <source>
        <strain>1IN</strain>
    </source>
</reference>
<evidence type="ECO:0000250" key="1">
    <source>
        <dbReference type="UniProtKB" id="Q46336"/>
    </source>
</evidence>
<evidence type="ECO:0000250" key="2">
    <source>
        <dbReference type="UniProtKB" id="Q50LF1"/>
    </source>
</evidence>
<evidence type="ECO:0000269" key="3">
    <source ref="1"/>
</evidence>
<evidence type="ECO:0000305" key="4"/>
<comment type="function">
    <text evidence="1 3">In the presence of tetrahydrofolate, catalyzes the oxidative demethylation of sarcosine to yield glycine, 5,10-methylenetetrahydrofolate and hydrogen peroxide (By similarity). In the absence of tetrahydrofolate, catalyzes the oxidative demethylation of sarcosine to yield glycine, formaldehyde and hydrogen peroxide (Ref.1).</text>
</comment>
<comment type="catalytic activity">
    <reaction evidence="1">
        <text>sarcosine + (6S)-5,6,7,8-tetrahydrofolate + O2 = (6R)-5,10-methylene-5,6,7,8-tetrahydrofolate + glycine + H2O2</text>
        <dbReference type="Rhea" id="RHEA:70455"/>
        <dbReference type="ChEBI" id="CHEBI:15379"/>
        <dbReference type="ChEBI" id="CHEBI:15636"/>
        <dbReference type="ChEBI" id="CHEBI:16240"/>
        <dbReference type="ChEBI" id="CHEBI:57305"/>
        <dbReference type="ChEBI" id="CHEBI:57433"/>
        <dbReference type="ChEBI" id="CHEBI:57453"/>
        <dbReference type="EC" id="1.5.3.24"/>
    </reaction>
</comment>
<comment type="catalytic activity">
    <reaction evidence="3">
        <text>sarcosine + O2 + H2O = formaldehyde + glycine + H2O2</text>
        <dbReference type="Rhea" id="RHEA:13313"/>
        <dbReference type="ChEBI" id="CHEBI:15377"/>
        <dbReference type="ChEBI" id="CHEBI:15379"/>
        <dbReference type="ChEBI" id="CHEBI:16240"/>
        <dbReference type="ChEBI" id="CHEBI:16842"/>
        <dbReference type="ChEBI" id="CHEBI:57305"/>
        <dbReference type="ChEBI" id="CHEBI:57433"/>
    </reaction>
</comment>
<comment type="subunit">
    <text evidence="3">Heterotetramer composed of subunits alpha (SoxA), beta (SoxB), gamma (SoxG) and delta (SoxD).</text>
</comment>
<comment type="subcellular location">
    <subcellularLocation>
        <location evidence="1">Cytoplasm</location>
    </subcellularLocation>
</comment>
<comment type="similarity">
    <text evidence="4">Belongs to the SoxD family.</text>
</comment>
<gene>
    <name type="primary">soxD</name>
</gene>
<keyword id="KW-0963">Cytoplasm</keyword>
<keyword id="KW-0479">Metal-binding</keyword>
<keyword id="KW-0560">Oxidoreductase</keyword>
<keyword id="KW-0862">Zinc</keyword>
<protein>
    <recommendedName>
        <fullName evidence="4">Sarcosine oxidase subunit delta</fullName>
        <shortName evidence="4">Sarcosine oxidase subunit D</shortName>
        <ecNumber evidence="1">1.5.3.24</ecNumber>
    </recommendedName>
    <alternativeName>
        <fullName evidence="1">Sarcosine oxidase (5,10-methylenetetrahydrofolate-forming) subunit delta</fullName>
    </alternativeName>
    <alternativeName>
        <fullName evidence="4">Tetrameric sarcosine oxidase subunit delta</fullName>
        <shortName evidence="4">TSOX subunit delta</shortName>
    </alternativeName>
</protein>
<accession>Q9AGP2</accession>
<name>TSOXD_ARTSP</name>
<feature type="chain" id="PRO_0000428958" description="Sarcosine oxidase subunit delta">
    <location>
        <begin position="1"/>
        <end position="98"/>
    </location>
</feature>
<feature type="binding site" evidence="2">
    <location>
        <position position="6"/>
    </location>
    <ligand>
        <name>Zn(2+)</name>
        <dbReference type="ChEBI" id="CHEBI:29105"/>
    </ligand>
</feature>
<feature type="binding site" evidence="2">
    <location>
        <position position="9"/>
    </location>
    <ligand>
        <name>Zn(2+)</name>
        <dbReference type="ChEBI" id="CHEBI:29105"/>
    </ligand>
</feature>
<feature type="binding site" evidence="2">
    <location>
        <position position="59"/>
    </location>
    <ligand>
        <name>Zn(2+)</name>
        <dbReference type="ChEBI" id="CHEBI:29105"/>
    </ligand>
</feature>
<feature type="binding site" evidence="2">
    <location>
        <position position="63"/>
    </location>
    <ligand>
        <name>Zn(2+)</name>
        <dbReference type="ChEBI" id="CHEBI:29105"/>
    </ligand>
</feature>
<dbReference type="EC" id="1.5.3.24" evidence="1"/>
<dbReference type="EMBL" id="AF329478">
    <property type="protein sequence ID" value="AAK16488.1"/>
    <property type="molecule type" value="Genomic_DNA"/>
</dbReference>
<dbReference type="SMR" id="Q9AGP2"/>
<dbReference type="GO" id="GO:0005737">
    <property type="term" value="C:cytoplasm"/>
    <property type="evidence" value="ECO:0007669"/>
    <property type="project" value="UniProtKB-SubCell"/>
</dbReference>
<dbReference type="GO" id="GO:0046872">
    <property type="term" value="F:metal ion binding"/>
    <property type="evidence" value="ECO:0007669"/>
    <property type="project" value="UniProtKB-KW"/>
</dbReference>
<dbReference type="GO" id="GO:0008115">
    <property type="term" value="F:sarcosine oxidase activity"/>
    <property type="evidence" value="ECO:0007669"/>
    <property type="project" value="UniProtKB-EC"/>
</dbReference>
<dbReference type="GO" id="GO:0046653">
    <property type="term" value="P:tetrahydrofolate metabolic process"/>
    <property type="evidence" value="ECO:0007669"/>
    <property type="project" value="InterPro"/>
</dbReference>
<dbReference type="Gene3D" id="3.30.2270.10">
    <property type="entry name" value="Folate-binding superfamily"/>
    <property type="match status" value="1"/>
</dbReference>
<dbReference type="InterPro" id="IPR006279">
    <property type="entry name" value="SoxD"/>
</dbReference>
<dbReference type="InterPro" id="IPR038561">
    <property type="entry name" value="SoxD_sf"/>
</dbReference>
<dbReference type="NCBIfam" id="TIGR01374">
    <property type="entry name" value="soxD"/>
    <property type="match status" value="1"/>
</dbReference>
<dbReference type="Pfam" id="PF04267">
    <property type="entry name" value="SoxD"/>
    <property type="match status" value="1"/>
</dbReference>
<sequence>MMLIECPNCGPRNETEFSYGGQAHVAYPEDPNTLSDKEWSRYLFYRGNSKGIFAERWVHSGGCRKWFNALRDTATYEFKAVYRAGEPRPELNTQGGSR</sequence>
<organism>
    <name type="scientific">Arthrobacter sp</name>
    <dbReference type="NCBI Taxonomy" id="1667"/>
    <lineage>
        <taxon>Bacteria</taxon>
        <taxon>Bacillati</taxon>
        <taxon>Actinomycetota</taxon>
        <taxon>Actinomycetes</taxon>
        <taxon>Micrococcales</taxon>
        <taxon>Micrococcaceae</taxon>
        <taxon>Arthrobacter</taxon>
    </lineage>
</organism>
<proteinExistence type="evidence at protein level"/>